<evidence type="ECO:0000255" key="1">
    <source>
        <dbReference type="HAMAP-Rule" id="MF_04017"/>
    </source>
</evidence>
<accession>Q9QJ20</accession>
<dbReference type="EMBL" id="AF157706">
    <property type="protein sequence ID" value="AAD49665.1"/>
    <property type="molecule type" value="Genomic_DNA"/>
</dbReference>
<dbReference type="RefSeq" id="NP_050244.1">
    <property type="nucleotide sequence ID" value="NC_000898.1"/>
</dbReference>
<dbReference type="SMR" id="Q9QJ20"/>
<dbReference type="DNASU" id="1497064"/>
<dbReference type="GeneID" id="1497064"/>
<dbReference type="KEGG" id="vg:1497064"/>
<dbReference type="Proteomes" id="UP000006930">
    <property type="component" value="Segment"/>
</dbReference>
<dbReference type="GO" id="GO:0042025">
    <property type="term" value="C:host cell nucleus"/>
    <property type="evidence" value="ECO:0007669"/>
    <property type="project" value="UniProtKB-SubCell"/>
</dbReference>
<dbReference type="GO" id="GO:0019028">
    <property type="term" value="C:viral capsid"/>
    <property type="evidence" value="ECO:0007669"/>
    <property type="project" value="UniProtKB-KW"/>
</dbReference>
<dbReference type="GO" id="GO:0051276">
    <property type="term" value="P:chromosome organization"/>
    <property type="evidence" value="ECO:0007669"/>
    <property type="project" value="InterPro"/>
</dbReference>
<dbReference type="HAMAP" id="MF_04017">
    <property type="entry name" value="HSV_CVC1"/>
    <property type="match status" value="1"/>
</dbReference>
<dbReference type="InterPro" id="IPR007640">
    <property type="entry name" value="UL17-like"/>
</dbReference>
<dbReference type="Pfam" id="PF04559">
    <property type="entry name" value="Herpes_UL17"/>
    <property type="match status" value="1"/>
</dbReference>
<organismHost>
    <name type="scientific">Homo sapiens</name>
    <name type="common">Human</name>
    <dbReference type="NCBI Taxonomy" id="9606"/>
</organismHost>
<proteinExistence type="inferred from homology"/>
<sequence length="442" mass="51636">METHLYYDTLYQYQGGVYPAHICLPTDAYLPMRVDCIESLYFRCVFFKNGMHYTEWSKLKFTVISREIKFKDVLKNADFDELFTGLVVMTIPIPIVDFHFDIDSVILKLVYPQLVHREIVLRLYDLICIRPSSDRPSEVSAKNIGIDFYQLTSQGNKQTPDEEKRCLFFQQGPLEPPSTVRGLKAAGNAKPMQFPAHVNEKMTESFLSDSWFEQKVRCKKILDFTQTYRVVVCWYELSFSREMQIENNLLSASQLKRVNAADFWDRTDRYLRDIGSRVLTHIVKTLQIHNRQFKQKFNCNFPVNFSFEHLLSFMQLGKDFWILNLTLDSCIIKAIICFLGFRNGRKSFLAQDEVWGDLIDCSKGSVIYGEKIQWILDSTNNLYSTRREKQNKSWELYVDCCALYVSEKLELDFVLPGGFAITGKFALTDGDIDFFNWRFGLS</sequence>
<comment type="function">
    <text evidence="1">Capsid vertex-specific component that plays a role during viral DNA encapsidation, assuring correct genome cleavage and presumably stabilizing capsids that contain full-length viral genomes.</text>
</comment>
<comment type="subunit">
    <text evidence="1">Interacts (via C-terminus) with capsid vertex component 2/CVC2.</text>
</comment>
<comment type="subcellular location">
    <subcellularLocation>
        <location evidence="1">Virion</location>
    </subcellularLocation>
    <subcellularLocation>
        <location evidence="1">Host nucleus</location>
    </subcellularLocation>
</comment>
<comment type="similarity">
    <text evidence="1">Belongs to the herpesviridae CVC1 protein family.</text>
</comment>
<organism>
    <name type="scientific">Human herpesvirus 6B (strain Z29)</name>
    <name type="common">HHV-6 variant B</name>
    <name type="synonym">Human B lymphotropic virus</name>
    <dbReference type="NCBI Taxonomy" id="36351"/>
    <lineage>
        <taxon>Viruses</taxon>
        <taxon>Duplodnaviria</taxon>
        <taxon>Heunggongvirae</taxon>
        <taxon>Peploviricota</taxon>
        <taxon>Herviviricetes</taxon>
        <taxon>Herpesvirales</taxon>
        <taxon>Orthoherpesviridae</taxon>
        <taxon>Betaherpesvirinae</taxon>
        <taxon>Roseolovirus</taxon>
        <taxon>Roseolovirus humanbeta6b</taxon>
        <taxon>Human herpesvirus 6B</taxon>
    </lineage>
</organism>
<feature type="chain" id="PRO_0000408434" description="Capsid vertex component 1">
    <location>
        <begin position="1"/>
        <end position="442"/>
    </location>
</feature>
<protein>
    <recommendedName>
        <fullName evidence="1">Capsid vertex component 1</fullName>
    </recommendedName>
</protein>
<name>CVC1_HHV6Z</name>
<reference key="1">
    <citation type="journal article" date="1999" name="J. Virol.">
        <title>Human herpesvirus 6B genome sequence: coding content and comparison with human herpesvirus 6A.</title>
        <authorList>
            <person name="Dominguez G."/>
            <person name="Dambaugh T.R."/>
            <person name="Stamey F.R."/>
            <person name="Dewhurst S."/>
            <person name="Inoue N."/>
            <person name="Pellett P.E."/>
        </authorList>
    </citation>
    <scope>NUCLEOTIDE SEQUENCE [LARGE SCALE GENOMIC DNA]</scope>
</reference>
<gene>
    <name evidence="1" type="primary">CVC1</name>
    <name type="ordered locus">U64</name>
</gene>
<keyword id="KW-0167">Capsid protein</keyword>
<keyword id="KW-1048">Host nucleus</keyword>
<keyword id="KW-0426">Late protein</keyword>
<keyword id="KW-1185">Reference proteome</keyword>
<keyword id="KW-0231">Viral genome packaging</keyword>
<keyword id="KW-1188">Viral release from host cell</keyword>
<keyword id="KW-0946">Virion</keyword>